<sequence length="2066" mass="233879">MSRNVPRIEMPESEENEFASLSLFSPSRPPLNSIPDPSQIQKANHLPHFDLVQKLEGTRAQHQRTLGPEKKFEVLEGRAGNSSDSNPKIVNRNGKSRSEPNSAQSTPTRNGARVSLGGGCATGARFLQSFGGRGRIPRGVSIAESVSFAETTPHFELNEDHSFWKDHNVQVLIRLRPLGTMERANQGYGKCLKQESPQTLVWLGHPEARFTFDHVASETISQEKLFRVAGLPMVENCLSGYNSCVFAYGQTGSGKTYTMMGEISEAEGSLGEDCGVTARIFEYLFSRIKMEEEERRDENLKFSCKCSFLEIYNEQITDLLEPSSTNLQLREDLGKGVYVENLVEHNVRTVSDVLKLLLQGATNRKIAATRMNSESSRSHSVFTCTIESLWEKDSLTRSRFARLNLVDLAGSERQKSSGAEGDRLKEAANINKSLSTLGLVIMSLVDLAHGKHRHVPYRDSRLTFLLQDSLGGNSKTMIIANVSPSLCSTNETLSTLKFAQRAKLIQNNAKVNEDASGDVTALQQEIRKLKVQLTSLLKNHDSCGALSDCISSLEESRYSGTCKVAGETRQDKCHCQVKNMNDNMIGALRREKIAESALQKSEAEIERIDCLVRDMEEDAKRIKIMLNLREEKVGEMEFCTSGSLMTKECLIEENKTLKGEIKLLRDSIDKNPELTRSALENTKLREQLQRYQKFYEHGEREALLAEVTGLRDQLLDVLEAKDESFSKHVMKENEMEKEFEDCRNMNSSLIRELDEIQAGLGRYLNFDQIQSNVVASSTRGAEQAETMPTISEIQEEVAISHSKNYDRGALVKTDEGIDRSILQFKLGKLMKDLEEARTLNCKYEKDHKSQLSQQEDIEVVREQVETETARTILELQEEVIALQSEFQRRICNLTEENQSIKDTITARESEIRALNQDWEKATLELTNFIVAGSKSIKNASTQIESIICSFPQVNAWIGDYVEKAAKNCIKKEETILLLQKSLEDARILVAEMNLKLNSLKGATIALNEFQLGGNAATTEEAFNLNNDVDRMSDEVDTLESNFKANQYSILKTERHAEAALAVTKWLSDSRDQHQMMEKVQDQSVKEFGTLSSISASLSAEGNADISLSRDGHLSDATYPKGDELSTSSSDFSNCRWQHDCALNVKCQGVSSSESDAQESNNKITSAALIAKNGSAHSVYCGEGRQSVEKPLTIMMGREETEYKCSKPLSSGVYMGLMQRMDPVRTFFDRFEEVNATMKEADLTICELVKANEKSNSVTEMWLQTHEELISKEKNLMDDLEQVKSILSACEEEKQVLLNQTHTTLADMENSVSLLEEYFQEMKRGVEETVEALFSHARLAGKELLQLISNSRPSLEQIASEFMEREFTMYATYQCHIGKLIDQILDQRKQVITPNLSGQETNQSVKINAIGYNAEDEVTKKQSREEIVTGLENDEVVQSHESLLYENLYLKKELERKEALFEGLLFDFRLLQESASNKRDIKNEMDELFDALCKVQLELELKASQVHELFVHNENLENCSIDLKTALFTSQSDLEQAKQRIQILAEQNDELRALVSDLCKEKAAAEEGLDEQRDLVNRLEKEILHLTTTAEKQLLSAVKSIKENLKKTSDEKDQIVDEICSLNNKLELAYAIADEKEAIAVEAHQESEASKIYAEQKEEEVKILEISVEELERTINILERRVYDMDEEVKRHRTTQDSLETELQALRQRLFRFENFTGTMVTTNESTEEYKSHISRSTGLQGAHSQIQVLQKEVAEQTKEIKQLKEYISEILLHSEAQSSAYQEKYKTLEVMIRDFKLEDSSSSAAETISHKTEKSSTRSRGSSSPFRCIVGLVQQMKLEKDQELTMARVRVEELESLLAVKQKEICTLNTRIAAADSMTHDVIRDLLGVKMDITSYAELIDQHQVQRVVEKAQQHAEEILSKEQEVMNLKRHIDYLFKDRESCMSELNKKDTDVLATQISLDQLQERVQLLSMQNEMLKNDKSNLLRKLAELDRTVHNAQASNHRVPQTTKDTASFKLADTDYTKRLENAQKLLSHANNELAKYRKTSNNHPSTRTQGQSSGTRYR</sequence>
<reference key="1">
    <citation type="journal article" date="2006" name="Curr. Biol.">
        <title>Two kinesins are involved in the spatial control of cytokinesis in Arabidopsis thaliana.</title>
        <authorList>
            <person name="Muller S."/>
            <person name="Han S."/>
            <person name="Smith L.G."/>
        </authorList>
    </citation>
    <scope>NUCLEOTIDE SEQUENCE [MRNA]</scope>
    <scope>TISSUE SPECIFICITY</scope>
    <scope>DISRUPTION PHENOTYPE</scope>
    <scope>FUNCTION</scope>
    <scope>INTERACTION WITH TAN</scope>
</reference>
<reference key="2">
    <citation type="journal article" date="2000" name="DNA Res.">
        <title>Structural analysis of Arabidopsis thaliana chromosome 3. I. Sequence features of the regions of 4,504,864 bp covered by sixty P1 and TAC clones.</title>
        <authorList>
            <person name="Sato S."/>
            <person name="Nakamura Y."/>
            <person name="Kaneko T."/>
            <person name="Katoh T."/>
            <person name="Asamizu E."/>
            <person name="Tabata S."/>
        </authorList>
    </citation>
    <scope>NUCLEOTIDE SEQUENCE [LARGE SCALE GENOMIC DNA]</scope>
    <source>
        <strain>cv. Columbia</strain>
    </source>
</reference>
<reference key="3">
    <citation type="journal article" date="2017" name="Plant J.">
        <title>Araport11: a complete reannotation of the Arabidopsis thaliana reference genome.</title>
        <authorList>
            <person name="Cheng C.Y."/>
            <person name="Krishnakumar V."/>
            <person name="Chan A.P."/>
            <person name="Thibaud-Nissen F."/>
            <person name="Schobel S."/>
            <person name="Town C.D."/>
        </authorList>
    </citation>
    <scope>GENOME REANNOTATION</scope>
    <source>
        <strain>cv. Columbia</strain>
    </source>
</reference>
<reference key="4">
    <citation type="journal article" date="2001" name="BMC Genomics">
        <title>Kinesins in the Arabidopsis genome: a comparative analysis among eukaryotes.</title>
        <authorList>
            <person name="Reddy A.S."/>
            <person name="Day I.S."/>
        </authorList>
    </citation>
    <scope>GENE FAMILY</scope>
</reference>
<reference key="5">
    <citation type="journal article" date="2006" name="BMC Genomics">
        <title>Comprehensive comparative analysis of kinesins in photosynthetic eukaryotes.</title>
        <authorList>
            <person name="Richardson D.N."/>
            <person name="Simmons M.P."/>
            <person name="Reddy A.S."/>
        </authorList>
    </citation>
    <scope>GENE FAMILY</scope>
    <scope>NOMENCLATURE</scope>
</reference>
<reference key="6">
    <citation type="journal article" date="2006" name="Trends Plant Sci.">
        <title>Mitosis-specific kinesins in Arabidopsis.</title>
        <authorList>
            <person name="Vanstraelen M."/>
            <person name="Inze D."/>
            <person name="Geelen D."/>
        </authorList>
    </citation>
    <scope>REVIEW</scope>
</reference>
<reference key="7">
    <citation type="journal article" date="2008" name="Proc. Natl. Acad. Sci. U.S.A.">
        <title>RanGAP1 is a continuous marker of the Arabidopsis cell division plane.</title>
        <authorList>
            <person name="Xu X.M."/>
            <person name="Zhao Q."/>
            <person name="Rodrigo-Peiris T."/>
            <person name="Brkljacic J."/>
            <person name="He C.S."/>
            <person name="Mueller S."/>
            <person name="Meier I."/>
        </authorList>
    </citation>
    <scope>INTERACTION WITH RANGAP1 AND TAN</scope>
</reference>
<reference key="8">
    <citation type="journal article" date="2011" name="J. Cell Sci.">
        <title>Tangled localization at the cortical division site of plant cells occurs by several mechanisms.</title>
        <authorList>
            <person name="Rasmussen C.G."/>
            <person name="Sun B."/>
            <person name="Smith L.G."/>
        </authorList>
    </citation>
    <scope>INTERACTION WITH TAN</scope>
    <scope>FUNCTION</scope>
</reference>
<reference key="9">
    <citation type="journal article" date="2012" name="Protoplasma">
        <title>Functions of the Arabidopsis kinesin superfamily of microtubule-based motor proteins.</title>
        <authorList>
            <person name="Zhu C."/>
            <person name="Dixit R."/>
        </authorList>
    </citation>
    <scope>REVIEW</scope>
</reference>
<keyword id="KW-0067">ATP-binding</keyword>
<keyword id="KW-0175">Coiled coil</keyword>
<keyword id="KW-0963">Cytoplasm</keyword>
<keyword id="KW-0206">Cytoskeleton</keyword>
<keyword id="KW-0493">Microtubule</keyword>
<keyword id="KW-0505">Motor protein</keyword>
<keyword id="KW-0547">Nucleotide-binding</keyword>
<keyword id="KW-1185">Reference proteome</keyword>
<protein>
    <recommendedName>
        <fullName evidence="11">Kinesin-like protein KIN-12C</fullName>
    </recommendedName>
    <alternativeName>
        <fullName evidence="10">Phragmoplast orienting kinesin 1</fullName>
    </alternativeName>
</protein>
<organism>
    <name type="scientific">Arabidopsis thaliana</name>
    <name type="common">Mouse-ear cress</name>
    <dbReference type="NCBI Taxonomy" id="3702"/>
    <lineage>
        <taxon>Eukaryota</taxon>
        <taxon>Viridiplantae</taxon>
        <taxon>Streptophyta</taxon>
        <taxon>Embryophyta</taxon>
        <taxon>Tracheophyta</taxon>
        <taxon>Spermatophyta</taxon>
        <taxon>Magnoliopsida</taxon>
        <taxon>eudicotyledons</taxon>
        <taxon>Gunneridae</taxon>
        <taxon>Pentapetalae</taxon>
        <taxon>rosids</taxon>
        <taxon>malvids</taxon>
        <taxon>Brassicales</taxon>
        <taxon>Brassicaceae</taxon>
        <taxon>Camelineae</taxon>
        <taxon>Arabidopsis</taxon>
    </lineage>
</organism>
<dbReference type="EMBL" id="DQ399529">
    <property type="protein sequence ID" value="ABD62996.1"/>
    <property type="molecule type" value="mRNA"/>
</dbReference>
<dbReference type="EMBL" id="AB022216">
    <property type="protein sequence ID" value="BAB02740.1"/>
    <property type="status" value="ALT_SEQ"/>
    <property type="molecule type" value="Genomic_DNA"/>
</dbReference>
<dbReference type="EMBL" id="CP002686">
    <property type="protein sequence ID" value="AEE75943.1"/>
    <property type="molecule type" value="Genomic_DNA"/>
</dbReference>
<dbReference type="RefSeq" id="NP_188362.2">
    <property type="nucleotide sequence ID" value="NM_112614.4"/>
</dbReference>
<dbReference type="SMR" id="Q27IK7"/>
<dbReference type="DIP" id="DIP-46422N"/>
<dbReference type="FunCoup" id="Q27IK7">
    <property type="interactions" value="813"/>
</dbReference>
<dbReference type="IntAct" id="Q27IK7">
    <property type="interactions" value="2"/>
</dbReference>
<dbReference type="STRING" id="3702.Q27IK7"/>
<dbReference type="iPTMnet" id="Q27IK7"/>
<dbReference type="PaxDb" id="3702-AT3G17360.1"/>
<dbReference type="EnsemblPlants" id="AT3G17360.1">
    <property type="protein sequence ID" value="AT3G17360.1"/>
    <property type="gene ID" value="AT3G17360"/>
</dbReference>
<dbReference type="GeneID" id="820999"/>
<dbReference type="Gramene" id="AT3G17360.1">
    <property type="protein sequence ID" value="AT3G17360.1"/>
    <property type="gene ID" value="AT3G17360"/>
</dbReference>
<dbReference type="KEGG" id="ath:AT3G17360"/>
<dbReference type="Araport" id="AT3G17360"/>
<dbReference type="TAIR" id="AT3G17360">
    <property type="gene designation" value="POK1"/>
</dbReference>
<dbReference type="eggNOG" id="ENOG502QR1R">
    <property type="taxonomic scope" value="Eukaryota"/>
</dbReference>
<dbReference type="HOGENOM" id="CLU_000399_1_1_1"/>
<dbReference type="InParanoid" id="Q27IK7"/>
<dbReference type="PhylomeDB" id="Q27IK7"/>
<dbReference type="PRO" id="PR:Q27IK7"/>
<dbReference type="Proteomes" id="UP000006548">
    <property type="component" value="Chromosome 3"/>
</dbReference>
<dbReference type="ExpressionAtlas" id="Q27IK7">
    <property type="expression patterns" value="baseline and differential"/>
</dbReference>
<dbReference type="GO" id="GO:0005874">
    <property type="term" value="C:microtubule"/>
    <property type="evidence" value="ECO:0007669"/>
    <property type="project" value="UniProtKB-KW"/>
</dbReference>
<dbReference type="GO" id="GO:0009524">
    <property type="term" value="C:phragmoplast"/>
    <property type="evidence" value="ECO:0007669"/>
    <property type="project" value="UniProtKB-SubCell"/>
</dbReference>
<dbReference type="GO" id="GO:0005524">
    <property type="term" value="F:ATP binding"/>
    <property type="evidence" value="ECO:0007669"/>
    <property type="project" value="UniProtKB-KW"/>
</dbReference>
<dbReference type="GO" id="GO:0008017">
    <property type="term" value="F:microtubule binding"/>
    <property type="evidence" value="ECO:0007669"/>
    <property type="project" value="InterPro"/>
</dbReference>
<dbReference type="GO" id="GO:0003777">
    <property type="term" value="F:microtubule motor activity"/>
    <property type="evidence" value="ECO:0007669"/>
    <property type="project" value="InterPro"/>
</dbReference>
<dbReference type="GO" id="GO:0000911">
    <property type="term" value="P:cytokinesis by cell plate formation"/>
    <property type="evidence" value="ECO:0000316"/>
    <property type="project" value="TAIR"/>
</dbReference>
<dbReference type="GO" id="GO:0007018">
    <property type="term" value="P:microtubule-based movement"/>
    <property type="evidence" value="ECO:0007669"/>
    <property type="project" value="InterPro"/>
</dbReference>
<dbReference type="GO" id="GO:0000281">
    <property type="term" value="P:mitotic cytokinesis"/>
    <property type="evidence" value="ECO:0000315"/>
    <property type="project" value="UniProtKB"/>
</dbReference>
<dbReference type="CDD" id="cd01373">
    <property type="entry name" value="KISc_KLP2_like"/>
    <property type="match status" value="1"/>
</dbReference>
<dbReference type="FunFam" id="3.40.850.10:FF:000033">
    <property type="entry name" value="Kinesin-like protein KIN-12E"/>
    <property type="match status" value="1"/>
</dbReference>
<dbReference type="Gene3D" id="3.40.850.10">
    <property type="entry name" value="Kinesin motor domain"/>
    <property type="match status" value="1"/>
</dbReference>
<dbReference type="InterPro" id="IPR044986">
    <property type="entry name" value="KIF15/KIN-12"/>
</dbReference>
<dbReference type="InterPro" id="IPR019821">
    <property type="entry name" value="Kinesin_motor_CS"/>
</dbReference>
<dbReference type="InterPro" id="IPR001752">
    <property type="entry name" value="Kinesin_motor_dom"/>
</dbReference>
<dbReference type="InterPro" id="IPR036961">
    <property type="entry name" value="Kinesin_motor_dom_sf"/>
</dbReference>
<dbReference type="InterPro" id="IPR027417">
    <property type="entry name" value="P-loop_NTPase"/>
</dbReference>
<dbReference type="PANTHER" id="PTHR37739:SF18">
    <property type="entry name" value="KINESIN-LIKE PROTEIN KIN-12C"/>
    <property type="match status" value="1"/>
</dbReference>
<dbReference type="PANTHER" id="PTHR37739">
    <property type="entry name" value="KINESIN-LIKE PROTEIN KIN-12D"/>
    <property type="match status" value="1"/>
</dbReference>
<dbReference type="Pfam" id="PF00225">
    <property type="entry name" value="Kinesin"/>
    <property type="match status" value="1"/>
</dbReference>
<dbReference type="PRINTS" id="PR00380">
    <property type="entry name" value="KINESINHEAVY"/>
</dbReference>
<dbReference type="SMART" id="SM00129">
    <property type="entry name" value="KISc"/>
    <property type="match status" value="1"/>
</dbReference>
<dbReference type="SUPFAM" id="SSF52540">
    <property type="entry name" value="P-loop containing nucleoside triphosphate hydrolases"/>
    <property type="match status" value="1"/>
</dbReference>
<dbReference type="PROSITE" id="PS00411">
    <property type="entry name" value="KINESIN_MOTOR_1"/>
    <property type="match status" value="1"/>
</dbReference>
<dbReference type="PROSITE" id="PS50067">
    <property type="entry name" value="KINESIN_MOTOR_2"/>
    <property type="match status" value="1"/>
</dbReference>
<gene>
    <name evidence="11" type="primary">KIN12C</name>
    <name evidence="13" type="synonym">POK1</name>
    <name evidence="12" type="ordered locus">At3g17360</name>
    <name evidence="14" type="ORF">MGD8.20</name>
</gene>
<evidence type="ECO:0000250" key="1"/>
<evidence type="ECO:0000250" key="2">
    <source>
        <dbReference type="UniProtKB" id="Q9LDN0"/>
    </source>
</evidence>
<evidence type="ECO:0000255" key="3"/>
<evidence type="ECO:0000255" key="4">
    <source>
        <dbReference type="PROSITE-ProRule" id="PRU00283"/>
    </source>
</evidence>
<evidence type="ECO:0000256" key="5">
    <source>
        <dbReference type="SAM" id="MobiDB-lite"/>
    </source>
</evidence>
<evidence type="ECO:0000269" key="6">
    <source>
    </source>
</evidence>
<evidence type="ECO:0000269" key="7">
    <source>
    </source>
</evidence>
<evidence type="ECO:0000269" key="8">
    <source>
    </source>
</evidence>
<evidence type="ECO:0000303" key="9">
    <source>
    </source>
</evidence>
<evidence type="ECO:0000303" key="10">
    <source>
    </source>
</evidence>
<evidence type="ECO:0000305" key="11"/>
<evidence type="ECO:0000312" key="12">
    <source>
        <dbReference type="Araport" id="AT3G17360"/>
    </source>
</evidence>
<evidence type="ECO:0000312" key="13">
    <source>
        <dbReference type="EMBL" id="ABD62996.1"/>
    </source>
</evidence>
<evidence type="ECO:0000312" key="14">
    <source>
        <dbReference type="EMBL" id="BAB02740.1"/>
    </source>
</evidence>
<comment type="function">
    <text evidence="6 8">Involved in the spatial control of cytokinesis by a proper phragmoplast guidance. Localizes TAN to the cortical division sites (CDS) during cytokinesis via direct binding.</text>
</comment>
<comment type="subunit">
    <text evidence="6 7 8">Interacts with TAN. Interacts with RANGAP1.</text>
</comment>
<comment type="interaction">
    <interactant intactId="EBI-6881384">
        <id>Q27IK7</id>
    </interactant>
    <interactant intactId="EBI-1779351">
        <id>Q9LE82</id>
        <label>RANGAP1</label>
    </interactant>
    <organismsDiffer>false</organismsDiffer>
    <experiments>2</experiments>
</comment>
<comment type="interaction">
    <interactant intactId="EBI-6881384">
        <id>Q27IK7</id>
    </interactant>
    <interactant intactId="EBI-6881406">
        <id>Q84M91</id>
        <label>TAN</label>
    </interactant>
    <organismsDiffer>false</organismsDiffer>
    <experiments>2</experiments>
</comment>
<comment type="subcellular location">
    <subcellularLocation>
        <location evidence="1">Cytoplasm</location>
        <location evidence="1">Cytoskeleton</location>
        <location evidence="1">Phragmoplast</location>
    </subcellularLocation>
</comment>
<comment type="tissue specificity">
    <text evidence="6">Expressed in tissues enriched in dividing cells, such as root meristems, root primordia, and leaf primordia/young leaves.</text>
</comment>
<comment type="disruption phenotype">
    <text evidence="6">No visible phenotype. Pok1 and pok2 double mutant dissplays smaller cotyledons as well as shorter, wider roots and hypocotyls with adult plants exhibiting a dwarfed stature and producing reduced numbers of seeds.</text>
</comment>
<comment type="similarity">
    <text evidence="9">Belongs to the TRAFAC class myosin-kinesin ATPase superfamily. Kinesin family. KIN-12 subfamily.</text>
</comment>
<comment type="sequence caution" evidence="11">
    <conflict type="erroneous gene model prediction">
        <sequence resource="EMBL-CDS" id="BAB02740"/>
    </conflict>
</comment>
<proteinExistence type="evidence at protein level"/>
<accession>Q27IK7</accession>
<accession>Q9LUT5</accession>
<name>KN12C_ARATH</name>
<feature type="chain" id="PRO_0000423588" description="Kinesin-like protein KIN-12C">
    <location>
        <begin position="1"/>
        <end position="2066"/>
    </location>
</feature>
<feature type="domain" description="Kinesin motor" evidence="4">
    <location>
        <begin position="168"/>
        <end position="505"/>
    </location>
</feature>
<feature type="region of interest" description="Disordered" evidence="5">
    <location>
        <begin position="1"/>
        <end position="41"/>
    </location>
</feature>
<feature type="region of interest" description="Disordered" evidence="5">
    <location>
        <begin position="59"/>
        <end position="116"/>
    </location>
</feature>
<feature type="region of interest" description="Microtubules-binding" evidence="2">
    <location>
        <begin position="375"/>
        <end position="379"/>
    </location>
</feature>
<feature type="region of interest" description="Microtubules-binding" evidence="2">
    <location>
        <begin position="406"/>
        <end position="412"/>
    </location>
</feature>
<feature type="region of interest" description="Microtubules-binding" evidence="2">
    <location>
        <begin position="454"/>
        <end position="458"/>
    </location>
</feature>
<feature type="region of interest" description="Disordered" evidence="5">
    <location>
        <begin position="1803"/>
        <end position="1823"/>
    </location>
</feature>
<feature type="region of interest" description="Disordered" evidence="5">
    <location>
        <begin position="2043"/>
        <end position="2066"/>
    </location>
</feature>
<feature type="coiled-coil region" evidence="3">
    <location>
        <begin position="1521"/>
        <end position="1618"/>
    </location>
</feature>
<feature type="coiled-coil region" evidence="3">
    <location>
        <begin position="1650"/>
        <end position="1772"/>
    </location>
</feature>
<feature type="coiled-coil region" evidence="3">
    <location>
        <begin position="1905"/>
        <end position="2051"/>
    </location>
</feature>
<feature type="compositionally biased region" description="Low complexity" evidence="5">
    <location>
        <begin position="20"/>
        <end position="33"/>
    </location>
</feature>
<feature type="compositionally biased region" description="Basic and acidic residues" evidence="5">
    <location>
        <begin position="67"/>
        <end position="76"/>
    </location>
</feature>
<feature type="compositionally biased region" description="Polar residues" evidence="5">
    <location>
        <begin position="99"/>
        <end position="109"/>
    </location>
</feature>
<feature type="compositionally biased region" description="Polar residues" evidence="5">
    <location>
        <begin position="2047"/>
        <end position="2066"/>
    </location>
</feature>
<feature type="binding site" evidence="4">
    <location>
        <begin position="249"/>
        <end position="256"/>
    </location>
    <ligand>
        <name>ATP</name>
        <dbReference type="ChEBI" id="CHEBI:30616"/>
    </ligand>
</feature>